<reference key="1">
    <citation type="journal article" date="2000" name="Theor. Appl. Genet.">
        <title>Phylogenetic relationships of the Magnoliaceae inferred from cpDNA matK sequences.</title>
        <authorList>
            <person name="Shi S."/>
            <person name="Jin H."/>
            <person name="Zhong Y."/>
            <person name="He X."/>
            <person name="Huang Y."/>
            <person name="Tan F."/>
            <person name="Boufford D.E."/>
        </authorList>
        <dbReference type="AGRICOLA" id="IND22081501"/>
    </citation>
    <scope>NUCLEOTIDE SEQUENCE [GENOMIC DNA]</scope>
</reference>
<feature type="chain" id="PRO_0000143486" description="Maturase K">
    <location>
        <begin position="1"/>
        <end position="507"/>
    </location>
</feature>
<comment type="function">
    <text evidence="1">Usually encoded in the trnK tRNA gene intron. Probably assists in splicing its own and other chloroplast group II introns.</text>
</comment>
<comment type="subcellular location">
    <subcellularLocation>
        <location>Plastid</location>
        <location>Chloroplast</location>
    </subcellularLocation>
</comment>
<comment type="similarity">
    <text evidence="1">Belongs to the intron maturase 2 family. MatK subfamily.</text>
</comment>
<accession>Q9MDX7</accession>
<keyword id="KW-0150">Chloroplast</keyword>
<keyword id="KW-0507">mRNA processing</keyword>
<keyword id="KW-0934">Plastid</keyword>
<keyword id="KW-0694">RNA-binding</keyword>
<keyword id="KW-0819">tRNA processing</keyword>
<evidence type="ECO:0000255" key="1">
    <source>
        <dbReference type="HAMAP-Rule" id="MF_01390"/>
    </source>
</evidence>
<proteinExistence type="inferred from homology"/>
<sequence>MEELQGYLEIDRSRQQHFLYPLLFQEYIYALAHDHGLNGSIFYEPMENLGYDNKSSSLIVKRLITRMHQQNHLIISVNDSNENGFVGRNKSFYSQMVSEGFAVIMEIPFSLRLVSSLEEKEIAKYHNLRSIHSIFPFFEDKLSHLNHVSDILIPHPIHLEILVQTLHCWIQDAPSLHLLRFFLHEYRNSNSLITPKKSISLLKKENQRFFLFLYNSHVYECESVLVFLRKQSSHLRSTSSGTFLERTHFYGKIEHLVVVLRNDFQKTLWLFKDPFMHYVRYQGKYILASKGTHLLMKKWKSHLVNFWQCHFYLWSRPDRIHINQLYNHSFYFLGYLSSVRLNTSVVGIQMLENSFLIDTSINKFETLVPIISLIGSVVKAKFCNVSGHPISKSVRADSSDSDIINRFGQIYRNLSHYHSGSSKKQTLYRIKYILRLSCARTLARKHKSTVRAFLKRLGSEFLEEFLTEEEQVLSLIFQRNSFPSYRSHRERIWYLDIIRINDLANHS</sequence>
<name>MATK_LIRCH</name>
<geneLocation type="chloroplast"/>
<protein>
    <recommendedName>
        <fullName evidence="1">Maturase K</fullName>
    </recommendedName>
    <alternativeName>
        <fullName evidence="1">Intron maturase</fullName>
    </alternativeName>
</protein>
<dbReference type="EMBL" id="AF123481">
    <property type="protein sequence ID" value="AAF43259.1"/>
    <property type="molecule type" value="Genomic_DNA"/>
</dbReference>
<dbReference type="GO" id="GO:0009507">
    <property type="term" value="C:chloroplast"/>
    <property type="evidence" value="ECO:0007669"/>
    <property type="project" value="UniProtKB-SubCell"/>
</dbReference>
<dbReference type="GO" id="GO:0003723">
    <property type="term" value="F:RNA binding"/>
    <property type="evidence" value="ECO:0007669"/>
    <property type="project" value="UniProtKB-KW"/>
</dbReference>
<dbReference type="GO" id="GO:0006397">
    <property type="term" value="P:mRNA processing"/>
    <property type="evidence" value="ECO:0007669"/>
    <property type="project" value="UniProtKB-KW"/>
</dbReference>
<dbReference type="GO" id="GO:0008380">
    <property type="term" value="P:RNA splicing"/>
    <property type="evidence" value="ECO:0007669"/>
    <property type="project" value="UniProtKB-UniRule"/>
</dbReference>
<dbReference type="GO" id="GO:0008033">
    <property type="term" value="P:tRNA processing"/>
    <property type="evidence" value="ECO:0007669"/>
    <property type="project" value="UniProtKB-KW"/>
</dbReference>
<dbReference type="HAMAP" id="MF_01390">
    <property type="entry name" value="MatK"/>
    <property type="match status" value="1"/>
</dbReference>
<dbReference type="InterPro" id="IPR024937">
    <property type="entry name" value="Domain_X"/>
</dbReference>
<dbReference type="InterPro" id="IPR002866">
    <property type="entry name" value="Maturase_MatK"/>
</dbReference>
<dbReference type="InterPro" id="IPR024942">
    <property type="entry name" value="Maturase_MatK_N"/>
</dbReference>
<dbReference type="PANTHER" id="PTHR34811">
    <property type="entry name" value="MATURASE K"/>
    <property type="match status" value="1"/>
</dbReference>
<dbReference type="PANTHER" id="PTHR34811:SF1">
    <property type="entry name" value="MATURASE K"/>
    <property type="match status" value="1"/>
</dbReference>
<dbReference type="Pfam" id="PF01348">
    <property type="entry name" value="Intron_maturas2"/>
    <property type="match status" value="1"/>
</dbReference>
<dbReference type="Pfam" id="PF01824">
    <property type="entry name" value="MatK_N"/>
    <property type="match status" value="1"/>
</dbReference>
<organism>
    <name type="scientific">Liriodendron chinense</name>
    <name type="common">Chinese tulip tree</name>
    <name type="synonym">Liriodendron tulipifera var. chinense</name>
    <dbReference type="NCBI Taxonomy" id="3414"/>
    <lineage>
        <taxon>Eukaryota</taxon>
        <taxon>Viridiplantae</taxon>
        <taxon>Streptophyta</taxon>
        <taxon>Embryophyta</taxon>
        <taxon>Tracheophyta</taxon>
        <taxon>Spermatophyta</taxon>
        <taxon>Magnoliopsida</taxon>
        <taxon>Magnoliidae</taxon>
        <taxon>Magnoliales</taxon>
        <taxon>Magnoliaceae</taxon>
        <taxon>Liriodendron</taxon>
    </lineage>
</organism>
<gene>
    <name evidence="1" type="primary">matK</name>
</gene>